<organism>
    <name type="scientific">Leptospira interrogans serogroup Icterohaemorrhagiae serovar Lai (strain 56601)</name>
    <dbReference type="NCBI Taxonomy" id="189518"/>
    <lineage>
        <taxon>Bacteria</taxon>
        <taxon>Pseudomonadati</taxon>
        <taxon>Spirochaetota</taxon>
        <taxon>Spirochaetia</taxon>
        <taxon>Leptospirales</taxon>
        <taxon>Leptospiraceae</taxon>
        <taxon>Leptospira</taxon>
    </lineage>
</organism>
<evidence type="ECO:0000255" key="1">
    <source>
        <dbReference type="HAMAP-Rule" id="MF_00451"/>
    </source>
</evidence>
<accession>Q8EYP5</accession>
<keyword id="KW-0067">ATP-binding</keyword>
<keyword id="KW-0963">Cytoplasm</keyword>
<keyword id="KW-0418">Kinase</keyword>
<keyword id="KW-0460">Magnesium</keyword>
<keyword id="KW-0479">Metal-binding</keyword>
<keyword id="KW-0546">Nucleotide metabolism</keyword>
<keyword id="KW-0547">Nucleotide-binding</keyword>
<keyword id="KW-0597">Phosphoprotein</keyword>
<keyword id="KW-1185">Reference proteome</keyword>
<keyword id="KW-0808">Transferase</keyword>
<dbReference type="EC" id="2.7.4.6" evidence="1"/>
<dbReference type="EMBL" id="AE010300">
    <property type="protein sequence ID" value="AAN51366.1"/>
    <property type="molecule type" value="Genomic_DNA"/>
</dbReference>
<dbReference type="RefSeq" id="NP_714348.1">
    <property type="nucleotide sequence ID" value="NC_004342.2"/>
</dbReference>
<dbReference type="RefSeq" id="WP_000091691.1">
    <property type="nucleotide sequence ID" value="NC_004342.2"/>
</dbReference>
<dbReference type="SMR" id="Q8EYP5"/>
<dbReference type="FunCoup" id="Q8EYP5">
    <property type="interactions" value="456"/>
</dbReference>
<dbReference type="STRING" id="189518.LA_4168"/>
<dbReference type="PaxDb" id="189518-LA_4168"/>
<dbReference type="EnsemblBacteria" id="AAN51366">
    <property type="protein sequence ID" value="AAN51366"/>
    <property type="gene ID" value="LA_4168"/>
</dbReference>
<dbReference type="KEGG" id="lil:LA_4168"/>
<dbReference type="PATRIC" id="fig|189518.3.peg.4139"/>
<dbReference type="HOGENOM" id="CLU_060216_6_3_12"/>
<dbReference type="InParanoid" id="Q8EYP5"/>
<dbReference type="OrthoDB" id="9801161at2"/>
<dbReference type="PRO" id="PR:Q8EYP5"/>
<dbReference type="Proteomes" id="UP000001408">
    <property type="component" value="Chromosome I"/>
</dbReference>
<dbReference type="GO" id="GO:0005737">
    <property type="term" value="C:cytoplasm"/>
    <property type="evidence" value="ECO:0007669"/>
    <property type="project" value="UniProtKB-SubCell"/>
</dbReference>
<dbReference type="GO" id="GO:0005524">
    <property type="term" value="F:ATP binding"/>
    <property type="evidence" value="ECO:0007669"/>
    <property type="project" value="UniProtKB-UniRule"/>
</dbReference>
<dbReference type="GO" id="GO:0046872">
    <property type="term" value="F:metal ion binding"/>
    <property type="evidence" value="ECO:0007669"/>
    <property type="project" value="UniProtKB-KW"/>
</dbReference>
<dbReference type="GO" id="GO:0004550">
    <property type="term" value="F:nucleoside diphosphate kinase activity"/>
    <property type="evidence" value="ECO:0007669"/>
    <property type="project" value="UniProtKB-UniRule"/>
</dbReference>
<dbReference type="GO" id="GO:0006241">
    <property type="term" value="P:CTP biosynthetic process"/>
    <property type="evidence" value="ECO:0007669"/>
    <property type="project" value="UniProtKB-UniRule"/>
</dbReference>
<dbReference type="GO" id="GO:0006183">
    <property type="term" value="P:GTP biosynthetic process"/>
    <property type="evidence" value="ECO:0007669"/>
    <property type="project" value="UniProtKB-UniRule"/>
</dbReference>
<dbReference type="GO" id="GO:0006163">
    <property type="term" value="P:purine nucleotide metabolic process"/>
    <property type="evidence" value="ECO:0000318"/>
    <property type="project" value="GO_Central"/>
</dbReference>
<dbReference type="GO" id="GO:0006220">
    <property type="term" value="P:pyrimidine nucleotide metabolic process"/>
    <property type="evidence" value="ECO:0000318"/>
    <property type="project" value="GO_Central"/>
</dbReference>
<dbReference type="GO" id="GO:0006228">
    <property type="term" value="P:UTP biosynthetic process"/>
    <property type="evidence" value="ECO:0007669"/>
    <property type="project" value="UniProtKB-UniRule"/>
</dbReference>
<dbReference type="CDD" id="cd04413">
    <property type="entry name" value="NDPk_I"/>
    <property type="match status" value="1"/>
</dbReference>
<dbReference type="FunFam" id="3.30.70.141:FF:000009">
    <property type="entry name" value="Nucleoside diphosphate kinase"/>
    <property type="match status" value="1"/>
</dbReference>
<dbReference type="Gene3D" id="3.30.70.141">
    <property type="entry name" value="Nucleoside diphosphate kinase-like domain"/>
    <property type="match status" value="1"/>
</dbReference>
<dbReference type="HAMAP" id="MF_00451">
    <property type="entry name" value="NDP_kinase"/>
    <property type="match status" value="1"/>
</dbReference>
<dbReference type="InterPro" id="IPR034907">
    <property type="entry name" value="NDK-like_dom"/>
</dbReference>
<dbReference type="InterPro" id="IPR036850">
    <property type="entry name" value="NDK-like_dom_sf"/>
</dbReference>
<dbReference type="InterPro" id="IPR001564">
    <property type="entry name" value="Nucleoside_diP_kinase"/>
</dbReference>
<dbReference type="NCBIfam" id="NF001908">
    <property type="entry name" value="PRK00668.1"/>
    <property type="match status" value="1"/>
</dbReference>
<dbReference type="NCBIfam" id="NF011114">
    <property type="entry name" value="PRK14542.1"/>
    <property type="match status" value="1"/>
</dbReference>
<dbReference type="PANTHER" id="PTHR46161">
    <property type="entry name" value="NUCLEOSIDE DIPHOSPHATE KINASE"/>
    <property type="match status" value="1"/>
</dbReference>
<dbReference type="PANTHER" id="PTHR46161:SF3">
    <property type="entry name" value="NUCLEOSIDE DIPHOSPHATE KINASE DDB_G0292928-RELATED"/>
    <property type="match status" value="1"/>
</dbReference>
<dbReference type="Pfam" id="PF00334">
    <property type="entry name" value="NDK"/>
    <property type="match status" value="1"/>
</dbReference>
<dbReference type="PRINTS" id="PR01243">
    <property type="entry name" value="NUCDPKINASE"/>
</dbReference>
<dbReference type="SMART" id="SM00562">
    <property type="entry name" value="NDK"/>
    <property type="match status" value="1"/>
</dbReference>
<dbReference type="SUPFAM" id="SSF54919">
    <property type="entry name" value="Nucleoside diphosphate kinase, NDK"/>
    <property type="match status" value="1"/>
</dbReference>
<dbReference type="PROSITE" id="PS51374">
    <property type="entry name" value="NDPK_LIKE"/>
    <property type="match status" value="1"/>
</dbReference>
<feature type="chain" id="PRO_0000136999" description="Nucleoside diphosphate kinase">
    <location>
        <begin position="1"/>
        <end position="137"/>
    </location>
</feature>
<feature type="active site" description="Pros-phosphohistidine intermediate" evidence="1">
    <location>
        <position position="115"/>
    </location>
</feature>
<feature type="binding site" evidence="1">
    <location>
        <position position="9"/>
    </location>
    <ligand>
        <name>ATP</name>
        <dbReference type="ChEBI" id="CHEBI:30616"/>
    </ligand>
</feature>
<feature type="binding site" evidence="1">
    <location>
        <position position="57"/>
    </location>
    <ligand>
        <name>ATP</name>
        <dbReference type="ChEBI" id="CHEBI:30616"/>
    </ligand>
</feature>
<feature type="binding site" evidence="1">
    <location>
        <position position="85"/>
    </location>
    <ligand>
        <name>ATP</name>
        <dbReference type="ChEBI" id="CHEBI:30616"/>
    </ligand>
</feature>
<feature type="binding site" evidence="1">
    <location>
        <position position="91"/>
    </location>
    <ligand>
        <name>ATP</name>
        <dbReference type="ChEBI" id="CHEBI:30616"/>
    </ligand>
</feature>
<feature type="binding site" evidence="1">
    <location>
        <position position="102"/>
    </location>
    <ligand>
        <name>ATP</name>
        <dbReference type="ChEBI" id="CHEBI:30616"/>
    </ligand>
</feature>
<feature type="binding site" evidence="1">
    <location>
        <position position="112"/>
    </location>
    <ligand>
        <name>ATP</name>
        <dbReference type="ChEBI" id="CHEBI:30616"/>
    </ligand>
</feature>
<proteinExistence type="inferred from homology"/>
<gene>
    <name evidence="1" type="primary">ndk</name>
    <name type="ordered locus">LA_4168</name>
</gene>
<sequence length="137" mass="15254">MSRTFIMIKPDGVKNKHVGNILSRIEKEGFKILGLKYLKLSLEDAKQFYKVHSARPFYNDLCNYMSSGPIVAAALERDNAVLHWREVIGATDPKEAAAGTIRALYAESKEANAVHGSDSDDNAALEISFFFKGNELF</sequence>
<reference key="1">
    <citation type="journal article" date="2003" name="Nature">
        <title>Unique physiological and pathogenic features of Leptospira interrogans revealed by whole-genome sequencing.</title>
        <authorList>
            <person name="Ren S.-X."/>
            <person name="Fu G."/>
            <person name="Jiang X.-G."/>
            <person name="Zeng R."/>
            <person name="Miao Y.-G."/>
            <person name="Xu H."/>
            <person name="Zhang Y.-X."/>
            <person name="Xiong H."/>
            <person name="Lu G."/>
            <person name="Lu L.-F."/>
            <person name="Jiang H.-Q."/>
            <person name="Jia J."/>
            <person name="Tu Y.-F."/>
            <person name="Jiang J.-X."/>
            <person name="Gu W.-Y."/>
            <person name="Zhang Y.-Q."/>
            <person name="Cai Z."/>
            <person name="Sheng H.-H."/>
            <person name="Yin H.-F."/>
            <person name="Zhang Y."/>
            <person name="Zhu G.-F."/>
            <person name="Wan M."/>
            <person name="Huang H.-L."/>
            <person name="Qian Z."/>
            <person name="Wang S.-Y."/>
            <person name="Ma W."/>
            <person name="Yao Z.-J."/>
            <person name="Shen Y."/>
            <person name="Qiang B.-Q."/>
            <person name="Xia Q.-C."/>
            <person name="Guo X.-K."/>
            <person name="Danchin A."/>
            <person name="Saint Girons I."/>
            <person name="Somerville R.L."/>
            <person name="Wen Y.-M."/>
            <person name="Shi M.-H."/>
            <person name="Chen Z."/>
            <person name="Xu J.-G."/>
            <person name="Zhao G.-P."/>
        </authorList>
    </citation>
    <scope>NUCLEOTIDE SEQUENCE [LARGE SCALE GENOMIC DNA]</scope>
    <source>
        <strain>56601</strain>
    </source>
</reference>
<protein>
    <recommendedName>
        <fullName evidence="1">Nucleoside diphosphate kinase</fullName>
        <shortName evidence="1">NDK</shortName>
        <shortName evidence="1">NDP kinase</shortName>
        <ecNumber evidence="1">2.7.4.6</ecNumber>
    </recommendedName>
    <alternativeName>
        <fullName evidence="1">Nucleoside-2-P kinase</fullName>
    </alternativeName>
</protein>
<comment type="function">
    <text evidence="1">Major role in the synthesis of nucleoside triphosphates other than ATP. The ATP gamma phosphate is transferred to the NDP beta phosphate via a ping-pong mechanism, using a phosphorylated active-site intermediate.</text>
</comment>
<comment type="catalytic activity">
    <reaction evidence="1">
        <text>a 2'-deoxyribonucleoside 5'-diphosphate + ATP = a 2'-deoxyribonucleoside 5'-triphosphate + ADP</text>
        <dbReference type="Rhea" id="RHEA:44640"/>
        <dbReference type="ChEBI" id="CHEBI:30616"/>
        <dbReference type="ChEBI" id="CHEBI:61560"/>
        <dbReference type="ChEBI" id="CHEBI:73316"/>
        <dbReference type="ChEBI" id="CHEBI:456216"/>
        <dbReference type="EC" id="2.7.4.6"/>
    </reaction>
</comment>
<comment type="catalytic activity">
    <reaction evidence="1">
        <text>a ribonucleoside 5'-diphosphate + ATP = a ribonucleoside 5'-triphosphate + ADP</text>
        <dbReference type="Rhea" id="RHEA:18113"/>
        <dbReference type="ChEBI" id="CHEBI:30616"/>
        <dbReference type="ChEBI" id="CHEBI:57930"/>
        <dbReference type="ChEBI" id="CHEBI:61557"/>
        <dbReference type="ChEBI" id="CHEBI:456216"/>
        <dbReference type="EC" id="2.7.4.6"/>
    </reaction>
</comment>
<comment type="cofactor">
    <cofactor evidence="1">
        <name>Mg(2+)</name>
        <dbReference type="ChEBI" id="CHEBI:18420"/>
    </cofactor>
</comment>
<comment type="subunit">
    <text evidence="1">Homotetramer.</text>
</comment>
<comment type="subcellular location">
    <subcellularLocation>
        <location evidence="1">Cytoplasm</location>
    </subcellularLocation>
</comment>
<comment type="similarity">
    <text evidence="1">Belongs to the NDK family.</text>
</comment>
<name>NDK_LEPIN</name>